<accession>B5BKB2</accession>
<dbReference type="EC" id="7.-.-.-" evidence="1"/>
<dbReference type="EMBL" id="FM200053">
    <property type="protein sequence ID" value="CAR59471.1"/>
    <property type="molecule type" value="Genomic_DNA"/>
</dbReference>
<dbReference type="RefSeq" id="WP_000915596.1">
    <property type="nucleotide sequence ID" value="NC_011147.1"/>
</dbReference>
<dbReference type="SMR" id="B5BKB2"/>
<dbReference type="KEGG" id="sek:SSPA1296"/>
<dbReference type="HOGENOM" id="CLU_010808_2_1_6"/>
<dbReference type="Proteomes" id="UP000001869">
    <property type="component" value="Chromosome"/>
</dbReference>
<dbReference type="GO" id="GO:0005886">
    <property type="term" value="C:plasma membrane"/>
    <property type="evidence" value="ECO:0007669"/>
    <property type="project" value="UniProtKB-SubCell"/>
</dbReference>
<dbReference type="GO" id="GO:0051539">
    <property type="term" value="F:4 iron, 4 sulfur cluster binding"/>
    <property type="evidence" value="ECO:0007669"/>
    <property type="project" value="UniProtKB-KW"/>
</dbReference>
<dbReference type="GO" id="GO:0009055">
    <property type="term" value="F:electron transfer activity"/>
    <property type="evidence" value="ECO:0007669"/>
    <property type="project" value="InterPro"/>
</dbReference>
<dbReference type="GO" id="GO:0046872">
    <property type="term" value="F:metal ion binding"/>
    <property type="evidence" value="ECO:0007669"/>
    <property type="project" value="UniProtKB-KW"/>
</dbReference>
<dbReference type="GO" id="GO:0022900">
    <property type="term" value="P:electron transport chain"/>
    <property type="evidence" value="ECO:0007669"/>
    <property type="project" value="UniProtKB-UniRule"/>
</dbReference>
<dbReference type="Gene3D" id="3.30.70.20">
    <property type="match status" value="1"/>
</dbReference>
<dbReference type="Gene3D" id="3.40.50.11540">
    <property type="entry name" value="NADH-ubiquinone oxidoreductase 51kDa subunit"/>
    <property type="match status" value="1"/>
</dbReference>
<dbReference type="HAMAP" id="MF_00461">
    <property type="entry name" value="RsxC_RnfC"/>
    <property type="match status" value="1"/>
</dbReference>
<dbReference type="InterPro" id="IPR017896">
    <property type="entry name" value="4Fe4S_Fe-S-bd"/>
</dbReference>
<dbReference type="InterPro" id="IPR017900">
    <property type="entry name" value="4Fe4S_Fe_S_CS"/>
</dbReference>
<dbReference type="InterPro" id="IPR010208">
    <property type="entry name" value="Ion_transpt_RnfC/RsxC"/>
</dbReference>
<dbReference type="InterPro" id="IPR011538">
    <property type="entry name" value="Nuo51_FMN-bd"/>
</dbReference>
<dbReference type="InterPro" id="IPR037225">
    <property type="entry name" value="Nuo51_FMN-bd_sf"/>
</dbReference>
<dbReference type="InterPro" id="IPR026902">
    <property type="entry name" value="RnfC_N"/>
</dbReference>
<dbReference type="InterPro" id="IPR019554">
    <property type="entry name" value="Soluble_ligand-bd"/>
</dbReference>
<dbReference type="NCBIfam" id="NF003454">
    <property type="entry name" value="PRK05035.1"/>
    <property type="match status" value="1"/>
</dbReference>
<dbReference type="NCBIfam" id="TIGR01945">
    <property type="entry name" value="rnfC"/>
    <property type="match status" value="1"/>
</dbReference>
<dbReference type="PANTHER" id="PTHR43034">
    <property type="entry name" value="ION-TRANSLOCATING OXIDOREDUCTASE COMPLEX SUBUNIT C"/>
    <property type="match status" value="1"/>
</dbReference>
<dbReference type="PANTHER" id="PTHR43034:SF2">
    <property type="entry name" value="ION-TRANSLOCATING OXIDOREDUCTASE COMPLEX SUBUNIT C"/>
    <property type="match status" value="1"/>
</dbReference>
<dbReference type="Pfam" id="PF01512">
    <property type="entry name" value="Complex1_51K"/>
    <property type="match status" value="1"/>
</dbReference>
<dbReference type="Pfam" id="PF12838">
    <property type="entry name" value="Fer4_7"/>
    <property type="match status" value="1"/>
</dbReference>
<dbReference type="Pfam" id="PF13375">
    <property type="entry name" value="RnfC_N"/>
    <property type="match status" value="1"/>
</dbReference>
<dbReference type="Pfam" id="PF10531">
    <property type="entry name" value="SLBB"/>
    <property type="match status" value="1"/>
</dbReference>
<dbReference type="SUPFAM" id="SSF46548">
    <property type="entry name" value="alpha-helical ferredoxin"/>
    <property type="match status" value="1"/>
</dbReference>
<dbReference type="SUPFAM" id="SSF142019">
    <property type="entry name" value="Nqo1 FMN-binding domain-like"/>
    <property type="match status" value="1"/>
</dbReference>
<dbReference type="PROSITE" id="PS00198">
    <property type="entry name" value="4FE4S_FER_1"/>
    <property type="match status" value="2"/>
</dbReference>
<dbReference type="PROSITE" id="PS51379">
    <property type="entry name" value="4FE4S_FER_2"/>
    <property type="match status" value="2"/>
</dbReference>
<feature type="chain" id="PRO_1000125367" description="Ion-translocating oxidoreductase complex subunit C">
    <location>
        <begin position="1"/>
        <end position="735"/>
    </location>
</feature>
<feature type="domain" description="4Fe-4S ferredoxin-type 1" evidence="1">
    <location>
        <begin position="368"/>
        <end position="397"/>
    </location>
</feature>
<feature type="domain" description="4Fe-4S ferredoxin-type 2" evidence="1">
    <location>
        <begin position="407"/>
        <end position="436"/>
    </location>
</feature>
<feature type="region of interest" description="Disordered" evidence="2">
    <location>
        <begin position="534"/>
        <end position="711"/>
    </location>
</feature>
<feature type="binding site" evidence="1">
    <location>
        <position position="377"/>
    </location>
    <ligand>
        <name>[4Fe-4S] cluster</name>
        <dbReference type="ChEBI" id="CHEBI:49883"/>
        <label>1</label>
    </ligand>
</feature>
<feature type="binding site" evidence="1">
    <location>
        <position position="380"/>
    </location>
    <ligand>
        <name>[4Fe-4S] cluster</name>
        <dbReference type="ChEBI" id="CHEBI:49883"/>
        <label>1</label>
    </ligand>
</feature>
<feature type="binding site" evidence="1">
    <location>
        <position position="383"/>
    </location>
    <ligand>
        <name>[4Fe-4S] cluster</name>
        <dbReference type="ChEBI" id="CHEBI:49883"/>
        <label>1</label>
    </ligand>
</feature>
<feature type="binding site" evidence="1">
    <location>
        <position position="387"/>
    </location>
    <ligand>
        <name>[4Fe-4S] cluster</name>
        <dbReference type="ChEBI" id="CHEBI:49883"/>
        <label>2</label>
    </ligand>
</feature>
<feature type="binding site" evidence="1">
    <location>
        <position position="416"/>
    </location>
    <ligand>
        <name>[4Fe-4S] cluster</name>
        <dbReference type="ChEBI" id="CHEBI:49883"/>
        <label>2</label>
    </ligand>
</feature>
<feature type="binding site" evidence="1">
    <location>
        <position position="419"/>
    </location>
    <ligand>
        <name>[4Fe-4S] cluster</name>
        <dbReference type="ChEBI" id="CHEBI:49883"/>
        <label>2</label>
    </ligand>
</feature>
<feature type="binding site" evidence="1">
    <location>
        <position position="422"/>
    </location>
    <ligand>
        <name>[4Fe-4S] cluster</name>
        <dbReference type="ChEBI" id="CHEBI:49883"/>
        <label>2</label>
    </ligand>
</feature>
<feature type="binding site" evidence="1">
    <location>
        <position position="426"/>
    </location>
    <ligand>
        <name>[4Fe-4S] cluster</name>
        <dbReference type="ChEBI" id="CHEBI:49883"/>
        <label>1</label>
    </ligand>
</feature>
<reference key="1">
    <citation type="journal article" date="2009" name="BMC Genomics">
        <title>Pseudogene accumulation in the evolutionary histories of Salmonella enterica serovars Paratyphi A and Typhi.</title>
        <authorList>
            <person name="Holt K.E."/>
            <person name="Thomson N.R."/>
            <person name="Wain J."/>
            <person name="Langridge G.C."/>
            <person name="Hasan R."/>
            <person name="Bhutta Z.A."/>
            <person name="Quail M.A."/>
            <person name="Norbertczak H."/>
            <person name="Walker D."/>
            <person name="Simmonds M."/>
            <person name="White B."/>
            <person name="Bason N."/>
            <person name="Mungall K."/>
            <person name="Dougan G."/>
            <person name="Parkhill J."/>
        </authorList>
    </citation>
    <scope>NUCLEOTIDE SEQUENCE [LARGE SCALE GENOMIC DNA]</scope>
    <source>
        <strain>AKU_12601</strain>
    </source>
</reference>
<gene>
    <name evidence="1" type="primary">rsxC</name>
    <name type="ordered locus">SSPA1296</name>
</gene>
<protein>
    <recommendedName>
        <fullName evidence="1">Ion-translocating oxidoreductase complex subunit C</fullName>
        <ecNumber evidence="1">7.-.-.-</ecNumber>
    </recommendedName>
    <alternativeName>
        <fullName evidence="1">Rsx electron transport complex subunit C</fullName>
    </alternativeName>
</protein>
<keyword id="KW-0004">4Fe-4S</keyword>
<keyword id="KW-0997">Cell inner membrane</keyword>
<keyword id="KW-1003">Cell membrane</keyword>
<keyword id="KW-0249">Electron transport</keyword>
<keyword id="KW-0408">Iron</keyword>
<keyword id="KW-0411">Iron-sulfur</keyword>
<keyword id="KW-0472">Membrane</keyword>
<keyword id="KW-0479">Metal-binding</keyword>
<keyword id="KW-0677">Repeat</keyword>
<keyword id="KW-1278">Translocase</keyword>
<keyword id="KW-0813">Transport</keyword>
<name>RSXC_SALPK</name>
<evidence type="ECO:0000255" key="1">
    <source>
        <dbReference type="HAMAP-Rule" id="MF_00461"/>
    </source>
</evidence>
<evidence type="ECO:0000256" key="2">
    <source>
        <dbReference type="SAM" id="MobiDB-lite"/>
    </source>
</evidence>
<proteinExistence type="inferred from homology"/>
<organism>
    <name type="scientific">Salmonella paratyphi A (strain AKU_12601)</name>
    <dbReference type="NCBI Taxonomy" id="554290"/>
    <lineage>
        <taxon>Bacteria</taxon>
        <taxon>Pseudomonadati</taxon>
        <taxon>Pseudomonadota</taxon>
        <taxon>Gammaproteobacteria</taxon>
        <taxon>Enterobacterales</taxon>
        <taxon>Enterobacteriaceae</taxon>
        <taxon>Salmonella</taxon>
    </lineage>
</organism>
<sequence length="735" mass="78750">MLKLFSAFRKDKIWDFDGGIHPPEMKSQSNGTPLRQVPLAPRFVIPLKQHIGAEGELCVSVGDRVLRGQALTRGRGRMLPVHAPTSGTVIAIAPHSTAHPSALAELSVIIDADGEDRWIEREGWSDYRAHSREALIERIHQYGVAGLGGAGFPTGVKLQGGGDKITTLIINAAECEPYITADDRLMQDCAAQIVEGIRILAHILQPREVLIGIEDNKPQAISMLRAVLADAHDISLRVIPTKYPSGGAKQLTQILTGKQVPHGGRSSDIGVLMQNVGTAYAVKRAVVDGEPITERVVTLTGEAISRPGNVWARLGTPVRHLLNDAGFCPSADQMVIMGGPLMGFTLPWLDVPVVKITNCLLAPSVTEMGAPQEEKSCIRCSACADACPADLLPQQLYWFSKGQQHDKATAHHIADCIECGACAWVCPSNIPLVQYFRQEKAEINAIRLEEKRAAEAKARFEARQARLEREKAARLARHKSAAVQPAAKDQDAIAAALARVKEKQAQATQPVVIQAGSLPDNSAVIAAREARKAQARAKQAAHPMADSAISGDDPRKAAVEAAIARAKARKQEQQAGSEPAEPVDPRKAAVEAAIARAKARKQEQQAGSEPAEPVDPRKAAVEAAIARAKARKQEQQAGSEPAEPVDPRKAAVEAAIARAKARKQEQQAGSEPAEPVDPRKAAVEAAIARAKARKQEQQTVSEPVEPADPRKAAVAAAIARVQAKKAAQQQVVNED</sequence>
<comment type="function">
    <text evidence="1">Part of a membrane-bound complex that couples electron transfer with translocation of ions across the membrane. Required to maintain the reduced state of SoxR.</text>
</comment>
<comment type="cofactor">
    <cofactor evidence="1">
        <name>[4Fe-4S] cluster</name>
        <dbReference type="ChEBI" id="CHEBI:49883"/>
    </cofactor>
    <text evidence="1">Binds 2 [4Fe-4S] clusters per subunit.</text>
</comment>
<comment type="subunit">
    <text evidence="1">The complex is composed of six subunits: RsxA, RsxB, RsxC, RsxD, RsxE and RsxG.</text>
</comment>
<comment type="subcellular location">
    <subcellularLocation>
        <location evidence="1">Cell inner membrane</location>
        <topology evidence="1">Peripheral membrane protein</topology>
    </subcellularLocation>
</comment>
<comment type="similarity">
    <text evidence="1">Belongs to the 4Fe4S bacterial-type ferredoxin family. RnfC subfamily.</text>
</comment>